<accession>G0YF19</accession>
<gene>
    <name type="primary">at</name>
</gene>
<name>SAT_STABO</name>
<feature type="chain" id="PRO_0000443099" description="Sophorolipid acetyltransferase">
    <location>
        <begin position="1"/>
        <end position="259"/>
    </location>
</feature>
<feature type="region of interest" description="Disordered" evidence="2">
    <location>
        <begin position="1"/>
        <end position="20"/>
    </location>
</feature>
<feature type="active site" description="Proton donor/acceptor" evidence="1">
    <location>
        <position position="159"/>
    </location>
</feature>
<feature type="binding site" description="in other chain" evidence="1">
    <location>
        <position position="129"/>
    </location>
    <ligand>
        <name>acetyl-CoA</name>
        <dbReference type="ChEBI" id="CHEBI:57288"/>
        <note>ligand shared between dimeric partners</note>
    </ligand>
</feature>
<feature type="binding site" description="in other chain" evidence="1">
    <location>
        <position position="186"/>
    </location>
    <ligand>
        <name>acetyl-CoA</name>
        <dbReference type="ChEBI" id="CHEBI:57288"/>
        <note>ligand shared between dimeric partners</note>
    </ligand>
</feature>
<feature type="binding site" description="in other chain" evidence="1">
    <location>
        <position position="204"/>
    </location>
    <ligand>
        <name>acetyl-CoA</name>
        <dbReference type="ChEBI" id="CHEBI:57288"/>
        <note>ligand shared between dimeric partners</note>
    </ligand>
</feature>
<feature type="binding site" evidence="1">
    <location>
        <begin position="209"/>
        <end position="210"/>
    </location>
    <ligand>
        <name>acetyl-CoA</name>
        <dbReference type="ChEBI" id="CHEBI:57288"/>
        <note>ligand shared between dimeric partners</note>
    </ligand>
</feature>
<feature type="binding site" evidence="1">
    <location>
        <position position="224"/>
    </location>
    <ligand>
        <name>acetyl-CoA</name>
        <dbReference type="ChEBI" id="CHEBI:57288"/>
        <note>ligand shared between dimeric partners</note>
    </ligand>
</feature>
<feature type="binding site" description="in other chain" evidence="1">
    <location>
        <position position="227"/>
    </location>
    <ligand>
        <name>acetyl-CoA</name>
        <dbReference type="ChEBI" id="CHEBI:57288"/>
        <note>ligand shared between dimeric partners</note>
    </ligand>
</feature>
<feature type="site" description="Transition state stabilizer" evidence="1">
    <location>
        <position position="129"/>
    </location>
</feature>
<comment type="function">
    <text evidence="3 4 6">Catalyzes the optional acetylation of acidic sophorolipids (SLs) at the 6' and/or 6'' carbon atom of the sophorose head group to produce acetylated acidic SLs in sophorolipid biosynthesis (PubMed:21702032, PubMed:23516968, PubMed:26298016). Has no activity toward lactonic sophorolipids, confirmimg that acetylation must precede lactonization (PubMed:26298016).</text>
</comment>
<comment type="induction">
    <text evidence="5">Induced in early stationary phase (at protein level).</text>
</comment>
<comment type="disruption phenotype">
    <text evidence="3">Produces purely unacetylated sophorolipids. Yields mainly lactonic SLs, in addition to minor amounts of acidic SLs.</text>
</comment>
<comment type="similarity">
    <text evidence="7">Belongs to the transferase hexapeptide repeat family.</text>
</comment>
<reference key="1">
    <citation type="journal article" date="2011" name="Biotechnol. Bioeng.">
        <title>One-step production of unacetylated sophorolipids by an acetyltransferase negative Candida bombicola.</title>
        <authorList>
            <person name="Saerens K.M."/>
            <person name="Saey L."/>
            <person name="Soetaert W."/>
        </authorList>
    </citation>
    <scope>NUCLEOTIDE SEQUENCE [GENOMIC DNA]</scope>
    <scope>FUNCTION</scope>
    <scope>DISRUPTION PHENOTYPE</scope>
    <source>
        <strain>ATCC 22214 / CBS 6009 / JCM 9596 / NBRC 10243 / NRRL Y-17069</strain>
    </source>
</reference>
<reference key="2">
    <citation type="journal article" date="2013" name="J. Proteome Res.">
        <title>SILAC-based proteome analysis of Starmerella bombicola sophorolipid production.</title>
        <authorList>
            <person name="Ciesielska K."/>
            <person name="Li B."/>
            <person name="Groeneboer S."/>
            <person name="Van Bogaert I."/>
            <person name="Lin Y.C."/>
            <person name="Soetaert W."/>
            <person name="Van de Peer Y."/>
            <person name="Devreese B."/>
        </authorList>
    </citation>
    <scope>IDENTIFICATION BY MASS SPECTROMETRY</scope>
    <scope>INDUCTION</scope>
    <source>
        <strain>ATCC 22214 / CBS 6009 / JCM 9596 / NBRC 10243 / NRRL Y-17069</strain>
    </source>
</reference>
<reference key="3">
    <citation type="journal article" date="2013" name="Mol. Microbiol.">
        <title>The biosynthetic gene cluster for sophorolipids: a biotechnological interesting biosurfactant produced by Starmerella bombicola.</title>
        <authorList>
            <person name="Van Bogaert I.N."/>
            <person name="Holvoet K."/>
            <person name="Roelants S.L."/>
            <person name="Li B."/>
            <person name="Lin Y.C."/>
            <person name="Van de Peer Y."/>
            <person name="Soetaert W."/>
        </authorList>
    </citation>
    <scope>FUNCTION</scope>
</reference>
<reference key="4">
    <citation type="journal article" date="2015" name="FEMS Yeast Res.">
        <title>Characterization of sophorolipid biosynthetic enzymes from Starmerella bombicola.</title>
        <authorList>
            <person name="Saerens K.M."/>
            <person name="Van Bogaert I.N."/>
            <person name="Soetaert W."/>
        </authorList>
    </citation>
    <scope>FUNCTION</scope>
    <scope>CATALYTIC ACTIVITY</scope>
    <scope>SUBSTRATE SPECIFICITY</scope>
</reference>
<organism>
    <name type="scientific">Starmerella bombicola</name>
    <name type="common">Yeast</name>
    <name type="synonym">Candida bombicola</name>
    <dbReference type="NCBI Taxonomy" id="75736"/>
    <lineage>
        <taxon>Eukaryota</taxon>
        <taxon>Fungi</taxon>
        <taxon>Dikarya</taxon>
        <taxon>Ascomycota</taxon>
        <taxon>Saccharomycotina</taxon>
        <taxon>Dipodascomycetes</taxon>
        <taxon>Dipodascales</taxon>
        <taxon>Trichomonascaceae</taxon>
        <taxon>Starmerella</taxon>
    </lineage>
</organism>
<keyword id="KW-0012">Acyltransferase</keyword>
<keyword id="KW-0677">Repeat</keyword>
<keyword id="KW-0808">Transferase</keyword>
<dbReference type="EC" id="2.3.1.-"/>
<dbReference type="EMBL" id="HQ670751">
    <property type="protein sequence ID" value="AEK28753.1"/>
    <property type="molecule type" value="Genomic_DNA"/>
</dbReference>
<dbReference type="SMR" id="G0YF19"/>
<dbReference type="GO" id="GO:0016407">
    <property type="term" value="F:acetyltransferase activity"/>
    <property type="evidence" value="ECO:0007669"/>
    <property type="project" value="InterPro"/>
</dbReference>
<dbReference type="GO" id="GO:0008374">
    <property type="term" value="F:O-acyltransferase activity"/>
    <property type="evidence" value="ECO:0007669"/>
    <property type="project" value="TreeGrafter"/>
</dbReference>
<dbReference type="CDD" id="cd03357">
    <property type="entry name" value="LbH_MAT_GAT"/>
    <property type="match status" value="1"/>
</dbReference>
<dbReference type="Gene3D" id="2.160.10.10">
    <property type="entry name" value="Hexapeptide repeat proteins"/>
    <property type="match status" value="1"/>
</dbReference>
<dbReference type="InterPro" id="IPR001451">
    <property type="entry name" value="Hexapep"/>
</dbReference>
<dbReference type="InterPro" id="IPR018357">
    <property type="entry name" value="Hexapep_transf_CS"/>
</dbReference>
<dbReference type="InterPro" id="IPR051159">
    <property type="entry name" value="Hexapeptide_acetyltransf"/>
</dbReference>
<dbReference type="InterPro" id="IPR024688">
    <property type="entry name" value="Mac_dom"/>
</dbReference>
<dbReference type="InterPro" id="IPR011004">
    <property type="entry name" value="Trimer_LpxA-like_sf"/>
</dbReference>
<dbReference type="PANTHER" id="PTHR23416:SF23">
    <property type="entry name" value="ACETYLTRANSFERASE C18B11.09C-RELATED"/>
    <property type="match status" value="1"/>
</dbReference>
<dbReference type="PANTHER" id="PTHR23416">
    <property type="entry name" value="SIALIC ACID SYNTHASE-RELATED"/>
    <property type="match status" value="1"/>
</dbReference>
<dbReference type="Pfam" id="PF00132">
    <property type="entry name" value="Hexapep"/>
    <property type="match status" value="1"/>
</dbReference>
<dbReference type="Pfam" id="PF12464">
    <property type="entry name" value="Mac"/>
    <property type="match status" value="1"/>
</dbReference>
<dbReference type="SMART" id="SM01266">
    <property type="entry name" value="Mac"/>
    <property type="match status" value="1"/>
</dbReference>
<dbReference type="SUPFAM" id="SSF51161">
    <property type="entry name" value="Trimeric LpxA-like enzymes"/>
    <property type="match status" value="1"/>
</dbReference>
<dbReference type="PROSITE" id="PS00101">
    <property type="entry name" value="HEXAPEP_TRANSFERASES"/>
    <property type="match status" value="1"/>
</dbReference>
<proteinExistence type="evidence at protein level"/>
<protein>
    <recommendedName>
        <fullName>Sophorolipid acetyltransferase</fullName>
        <ecNumber>2.3.1.-</ecNumber>
    </recommendedName>
    <alternativeName>
        <fullName>Carboxyhydrate transacetylase</fullName>
    </alternativeName>
</protein>
<evidence type="ECO:0000250" key="1">
    <source>
        <dbReference type="UniProtKB" id="P07464"/>
    </source>
</evidence>
<evidence type="ECO:0000256" key="2">
    <source>
        <dbReference type="SAM" id="MobiDB-lite"/>
    </source>
</evidence>
<evidence type="ECO:0000269" key="3">
    <source>
    </source>
</evidence>
<evidence type="ECO:0000269" key="4">
    <source>
    </source>
</evidence>
<evidence type="ECO:0000269" key="5">
    <source>
    </source>
</evidence>
<evidence type="ECO:0000269" key="6">
    <source>
    </source>
</evidence>
<evidence type="ECO:0000305" key="7"/>
<sequence length="259" mass="28581">MVVNSSKDPQNKGMTPRKEIDQEMVSWAKKNLKNTPGNENYEKMVSGVPYNPYDPDLMFRALATSEKVREFNTIASESRTFESNHAAYIKKVEILKDTFGQTKDIVWLTAPFSVDFGFNISVGEHFYANFNVCFLDSAPIIFGDEVIVGPNTTFVTATHPISPEKRARRIVYALPIKVGNNVWIGANVTVLPGVTIGDGSTIAAGAVVREDVPPRTVVGGVPARILKHIPEEDPDEAEGEELEFLLPVEMNVNTANQKV</sequence>